<comment type="function">
    <text evidence="1">This protein specifically catalyzes the removal of signal peptides from prolipoproteins.</text>
</comment>
<comment type="catalytic activity">
    <reaction evidence="1">
        <text>Release of signal peptides from bacterial membrane prolipoproteins. Hydrolyzes -Xaa-Yaa-Zaa-|-(S,diacylglyceryl)Cys-, in which Xaa is hydrophobic (preferably Leu), and Yaa (Ala or Ser) and Zaa (Gly or Ala) have small, neutral side chains.</text>
        <dbReference type="EC" id="3.4.23.36"/>
    </reaction>
</comment>
<comment type="pathway">
    <text evidence="1">Protein modification; lipoprotein biosynthesis (signal peptide cleavage).</text>
</comment>
<comment type="subcellular location">
    <subcellularLocation>
        <location evidence="1">Cell inner membrane</location>
        <topology evidence="1">Multi-pass membrane protein</topology>
    </subcellularLocation>
</comment>
<comment type="similarity">
    <text evidence="1 2">Belongs to the peptidase A8 family.</text>
</comment>
<gene>
    <name evidence="1" type="primary">lspA</name>
    <name type="synonym">lsp</name>
    <name type="ordered locus">aq_1837</name>
</gene>
<organism>
    <name type="scientific">Aquifex aeolicus (strain VF5)</name>
    <dbReference type="NCBI Taxonomy" id="224324"/>
    <lineage>
        <taxon>Bacteria</taxon>
        <taxon>Pseudomonadati</taxon>
        <taxon>Aquificota</taxon>
        <taxon>Aquificia</taxon>
        <taxon>Aquificales</taxon>
        <taxon>Aquificaceae</taxon>
        <taxon>Aquifex</taxon>
    </lineage>
</organism>
<keyword id="KW-0064">Aspartyl protease</keyword>
<keyword id="KW-0997">Cell inner membrane</keyword>
<keyword id="KW-1003">Cell membrane</keyword>
<keyword id="KW-0378">Hydrolase</keyword>
<keyword id="KW-0472">Membrane</keyword>
<keyword id="KW-0645">Protease</keyword>
<keyword id="KW-1185">Reference proteome</keyword>
<keyword id="KW-0812">Transmembrane</keyword>
<keyword id="KW-1133">Transmembrane helix</keyword>
<sequence length="167" mass="18919">MENFLRKTAWLYLSIAVSVFLLDIITKNLAEKLFTTHVEVFPFLEFYLIYNKGVAFGLLSELPDPLRLPLLLITPVIALIITFLYALYSGDRIVAISMGLIGGGALGNLYDRLFLGMVRDFIHLHIGEYYWPAFNIADASISIGIALLILKYFFTKPALKNLVNRTR</sequence>
<proteinExistence type="inferred from homology"/>
<feature type="chain" id="PRO_0000178767" description="Lipoprotein signal peptidase">
    <location>
        <begin position="1"/>
        <end position="167"/>
    </location>
</feature>
<feature type="transmembrane region" description="Helical" evidence="1">
    <location>
        <begin position="9"/>
        <end position="29"/>
    </location>
</feature>
<feature type="transmembrane region" description="Helical" evidence="1">
    <location>
        <begin position="68"/>
        <end position="88"/>
    </location>
</feature>
<feature type="transmembrane region" description="Helical" evidence="1">
    <location>
        <begin position="98"/>
        <end position="118"/>
    </location>
</feature>
<feature type="transmembrane region" description="Helical" evidence="1">
    <location>
        <begin position="130"/>
        <end position="150"/>
    </location>
</feature>
<feature type="active site" evidence="1">
    <location>
        <position position="120"/>
    </location>
</feature>
<feature type="active site" evidence="1">
    <location>
        <position position="138"/>
    </location>
</feature>
<reference key="1">
    <citation type="journal article" date="1998" name="Nature">
        <title>The complete genome of the hyperthermophilic bacterium Aquifex aeolicus.</title>
        <authorList>
            <person name="Deckert G."/>
            <person name="Warren P.V."/>
            <person name="Gaasterland T."/>
            <person name="Young W.G."/>
            <person name="Lenox A.L."/>
            <person name="Graham D.E."/>
            <person name="Overbeek R."/>
            <person name="Snead M.A."/>
            <person name="Keller M."/>
            <person name="Aujay M."/>
            <person name="Huber R."/>
            <person name="Feldman R.A."/>
            <person name="Short J.M."/>
            <person name="Olsen G.J."/>
            <person name="Swanson R.V."/>
        </authorList>
    </citation>
    <scope>NUCLEOTIDE SEQUENCE [LARGE SCALE GENOMIC DNA]</scope>
    <source>
        <strain>VF5</strain>
    </source>
</reference>
<dbReference type="EC" id="3.4.23.36" evidence="1"/>
<dbReference type="EMBL" id="AE000657">
    <property type="protein sequence ID" value="AAC07652.1"/>
    <property type="molecule type" value="Genomic_DNA"/>
</dbReference>
<dbReference type="PIR" id="B70458">
    <property type="entry name" value="B70458"/>
</dbReference>
<dbReference type="RefSeq" id="NP_214259.1">
    <property type="nucleotide sequence ID" value="NC_000918.1"/>
</dbReference>
<dbReference type="RefSeq" id="WP_010881195.1">
    <property type="nucleotide sequence ID" value="NC_000918.1"/>
</dbReference>
<dbReference type="SMR" id="O67692"/>
<dbReference type="FunCoup" id="O67692">
    <property type="interactions" value="265"/>
</dbReference>
<dbReference type="STRING" id="224324.aq_1837"/>
<dbReference type="EnsemblBacteria" id="AAC07652">
    <property type="protein sequence ID" value="AAC07652"/>
    <property type="gene ID" value="aq_1837"/>
</dbReference>
<dbReference type="KEGG" id="aae:aq_1837"/>
<dbReference type="eggNOG" id="COG0597">
    <property type="taxonomic scope" value="Bacteria"/>
</dbReference>
<dbReference type="HOGENOM" id="CLU_083252_4_3_0"/>
<dbReference type="InParanoid" id="O67692"/>
<dbReference type="OrthoDB" id="9810259at2"/>
<dbReference type="UniPathway" id="UPA00665"/>
<dbReference type="Proteomes" id="UP000000798">
    <property type="component" value="Chromosome"/>
</dbReference>
<dbReference type="GO" id="GO:0005886">
    <property type="term" value="C:plasma membrane"/>
    <property type="evidence" value="ECO:0000318"/>
    <property type="project" value="GO_Central"/>
</dbReference>
<dbReference type="GO" id="GO:0004190">
    <property type="term" value="F:aspartic-type endopeptidase activity"/>
    <property type="evidence" value="ECO:0007669"/>
    <property type="project" value="UniProtKB-UniRule"/>
</dbReference>
<dbReference type="GO" id="GO:0004175">
    <property type="term" value="F:endopeptidase activity"/>
    <property type="evidence" value="ECO:0000318"/>
    <property type="project" value="GO_Central"/>
</dbReference>
<dbReference type="GO" id="GO:0006508">
    <property type="term" value="P:proteolysis"/>
    <property type="evidence" value="ECO:0007669"/>
    <property type="project" value="UniProtKB-KW"/>
</dbReference>
<dbReference type="HAMAP" id="MF_00161">
    <property type="entry name" value="LspA"/>
    <property type="match status" value="1"/>
</dbReference>
<dbReference type="InterPro" id="IPR001872">
    <property type="entry name" value="Peptidase_A8"/>
</dbReference>
<dbReference type="NCBIfam" id="TIGR00077">
    <property type="entry name" value="lspA"/>
    <property type="match status" value="1"/>
</dbReference>
<dbReference type="NCBIfam" id="NF011360">
    <property type="entry name" value="PRK14779.1"/>
    <property type="match status" value="1"/>
</dbReference>
<dbReference type="PANTHER" id="PTHR33695">
    <property type="entry name" value="LIPOPROTEIN SIGNAL PEPTIDASE"/>
    <property type="match status" value="1"/>
</dbReference>
<dbReference type="PANTHER" id="PTHR33695:SF1">
    <property type="entry name" value="LIPOPROTEIN SIGNAL PEPTIDASE"/>
    <property type="match status" value="1"/>
</dbReference>
<dbReference type="Pfam" id="PF01252">
    <property type="entry name" value="Peptidase_A8"/>
    <property type="match status" value="1"/>
</dbReference>
<dbReference type="PRINTS" id="PR00781">
    <property type="entry name" value="LIPOSIGPTASE"/>
</dbReference>
<dbReference type="PROSITE" id="PS00855">
    <property type="entry name" value="SPASE_II"/>
    <property type="match status" value="1"/>
</dbReference>
<name>LSPA_AQUAE</name>
<evidence type="ECO:0000255" key="1">
    <source>
        <dbReference type="HAMAP-Rule" id="MF_00161"/>
    </source>
</evidence>
<evidence type="ECO:0000305" key="2"/>
<accession>O67692</accession>
<protein>
    <recommendedName>
        <fullName evidence="1">Lipoprotein signal peptidase</fullName>
        <ecNumber evidence="1">3.4.23.36</ecNumber>
    </recommendedName>
    <alternativeName>
        <fullName evidence="1">Prolipoprotein signal peptidase</fullName>
    </alternativeName>
    <alternativeName>
        <fullName evidence="1">Signal peptidase II</fullName>
        <shortName evidence="1">SPase II</shortName>
    </alternativeName>
</protein>